<feature type="chain" id="PRO_0000161090" description="Elongation factor Ts">
    <location>
        <begin position="1"/>
        <end position="305"/>
    </location>
</feature>
<feature type="region of interest" description="Involved in Mg(2+) ion dislocation from EF-Tu" evidence="1">
    <location>
        <begin position="79"/>
        <end position="82"/>
    </location>
</feature>
<proteinExistence type="inferred from homology"/>
<protein>
    <recommendedName>
        <fullName evidence="1">Elongation factor Ts</fullName>
        <shortName evidence="1">EF-Ts</shortName>
    </recommendedName>
</protein>
<organism>
    <name type="scientific">Brucella melitensis biotype 1 (strain ATCC 23456 / CCUG 17765 / NCTC 10094 / 16M)</name>
    <dbReference type="NCBI Taxonomy" id="224914"/>
    <lineage>
        <taxon>Bacteria</taxon>
        <taxon>Pseudomonadati</taxon>
        <taxon>Pseudomonadota</taxon>
        <taxon>Alphaproteobacteria</taxon>
        <taxon>Hyphomicrobiales</taxon>
        <taxon>Brucellaceae</taxon>
        <taxon>Brucella/Ochrobactrum group</taxon>
        <taxon>Brucella</taxon>
    </lineage>
</organism>
<gene>
    <name evidence="1" type="primary">tsf</name>
    <name type="ordered locus">BMEI0824</name>
</gene>
<accession>P64048</accession>
<accession>Q8YHH5</accession>
<reference key="1">
    <citation type="journal article" date="2002" name="Proc. Natl. Acad. Sci. U.S.A.">
        <title>The genome sequence of the facultative intracellular pathogen Brucella melitensis.</title>
        <authorList>
            <person name="DelVecchio V.G."/>
            <person name="Kapatral V."/>
            <person name="Redkar R.J."/>
            <person name="Patra G."/>
            <person name="Mujer C."/>
            <person name="Los T."/>
            <person name="Ivanova N."/>
            <person name="Anderson I."/>
            <person name="Bhattacharyya A."/>
            <person name="Lykidis A."/>
            <person name="Reznik G."/>
            <person name="Jablonski L."/>
            <person name="Larsen N."/>
            <person name="D'Souza M."/>
            <person name="Bernal A."/>
            <person name="Mazur M."/>
            <person name="Goltsman E."/>
            <person name="Selkov E."/>
            <person name="Elzer P.H."/>
            <person name="Hagius S."/>
            <person name="O'Callaghan D."/>
            <person name="Letesson J.-J."/>
            <person name="Haselkorn R."/>
            <person name="Kyrpides N.C."/>
            <person name="Overbeek R."/>
        </authorList>
    </citation>
    <scope>NUCLEOTIDE SEQUENCE [LARGE SCALE GENOMIC DNA]</scope>
    <source>
        <strain>ATCC 23456 / CCUG 17765 / NCTC 10094 / 16M</strain>
    </source>
</reference>
<dbReference type="EMBL" id="AE008917">
    <property type="protein sequence ID" value="AAL52005.1"/>
    <property type="status" value="ALT_INIT"/>
    <property type="molecule type" value="Genomic_DNA"/>
</dbReference>
<dbReference type="PIR" id="AB3355">
    <property type="entry name" value="AB3355"/>
</dbReference>
<dbReference type="RefSeq" id="WP_002964288.1">
    <property type="nucleotide sequence ID" value="NZ_GG703780.1"/>
</dbReference>
<dbReference type="SMR" id="P64048"/>
<dbReference type="GeneID" id="93016505"/>
<dbReference type="KEGG" id="bme:BMEI0824"/>
<dbReference type="KEGG" id="bmel:DK63_596"/>
<dbReference type="PATRIC" id="fig|224914.52.peg.621"/>
<dbReference type="eggNOG" id="COG0264">
    <property type="taxonomic scope" value="Bacteria"/>
</dbReference>
<dbReference type="PhylomeDB" id="P64048"/>
<dbReference type="Proteomes" id="UP000000419">
    <property type="component" value="Chromosome I"/>
</dbReference>
<dbReference type="GO" id="GO:0005737">
    <property type="term" value="C:cytoplasm"/>
    <property type="evidence" value="ECO:0007669"/>
    <property type="project" value="UniProtKB-SubCell"/>
</dbReference>
<dbReference type="GO" id="GO:0003746">
    <property type="term" value="F:translation elongation factor activity"/>
    <property type="evidence" value="ECO:0007669"/>
    <property type="project" value="UniProtKB-UniRule"/>
</dbReference>
<dbReference type="CDD" id="cd14275">
    <property type="entry name" value="UBA_EF-Ts"/>
    <property type="match status" value="1"/>
</dbReference>
<dbReference type="FunFam" id="1.10.286.20:FF:000001">
    <property type="entry name" value="Elongation factor Ts"/>
    <property type="match status" value="1"/>
</dbReference>
<dbReference type="FunFam" id="1.10.8.10:FF:000001">
    <property type="entry name" value="Elongation factor Ts"/>
    <property type="match status" value="1"/>
</dbReference>
<dbReference type="Gene3D" id="1.10.286.20">
    <property type="match status" value="1"/>
</dbReference>
<dbReference type="Gene3D" id="1.10.8.10">
    <property type="entry name" value="DNA helicase RuvA subunit, C-terminal domain"/>
    <property type="match status" value="1"/>
</dbReference>
<dbReference type="Gene3D" id="3.30.479.20">
    <property type="entry name" value="Elongation factor Ts, dimerisation domain"/>
    <property type="match status" value="2"/>
</dbReference>
<dbReference type="HAMAP" id="MF_00050">
    <property type="entry name" value="EF_Ts"/>
    <property type="match status" value="1"/>
</dbReference>
<dbReference type="InterPro" id="IPR036402">
    <property type="entry name" value="EF-Ts_dimer_sf"/>
</dbReference>
<dbReference type="InterPro" id="IPR001816">
    <property type="entry name" value="Transl_elong_EFTs/EF1B"/>
</dbReference>
<dbReference type="InterPro" id="IPR014039">
    <property type="entry name" value="Transl_elong_EFTs/EF1B_dimer"/>
</dbReference>
<dbReference type="InterPro" id="IPR018101">
    <property type="entry name" value="Transl_elong_Ts_CS"/>
</dbReference>
<dbReference type="InterPro" id="IPR009060">
    <property type="entry name" value="UBA-like_sf"/>
</dbReference>
<dbReference type="NCBIfam" id="TIGR00116">
    <property type="entry name" value="tsf"/>
    <property type="match status" value="1"/>
</dbReference>
<dbReference type="PANTHER" id="PTHR11741">
    <property type="entry name" value="ELONGATION FACTOR TS"/>
    <property type="match status" value="1"/>
</dbReference>
<dbReference type="PANTHER" id="PTHR11741:SF0">
    <property type="entry name" value="ELONGATION FACTOR TS, MITOCHONDRIAL"/>
    <property type="match status" value="1"/>
</dbReference>
<dbReference type="Pfam" id="PF00889">
    <property type="entry name" value="EF_TS"/>
    <property type="match status" value="1"/>
</dbReference>
<dbReference type="SUPFAM" id="SSF54713">
    <property type="entry name" value="Elongation factor Ts (EF-Ts), dimerisation domain"/>
    <property type="match status" value="2"/>
</dbReference>
<dbReference type="SUPFAM" id="SSF46934">
    <property type="entry name" value="UBA-like"/>
    <property type="match status" value="1"/>
</dbReference>
<dbReference type="PROSITE" id="PS01127">
    <property type="entry name" value="EF_TS_2"/>
    <property type="match status" value="1"/>
</dbReference>
<comment type="function">
    <text evidence="1">Associates with the EF-Tu.GDP complex and induces the exchange of GDP to GTP. It remains bound to the aminoacyl-tRNA.EF-Tu.GTP complex up to the GTP hydrolysis stage on the ribosome.</text>
</comment>
<comment type="subcellular location">
    <subcellularLocation>
        <location evidence="1">Cytoplasm</location>
    </subcellularLocation>
</comment>
<comment type="similarity">
    <text evidence="1">Belongs to the EF-Ts family.</text>
</comment>
<comment type="sequence caution" evidence="2">
    <conflict type="erroneous initiation">
        <sequence resource="EMBL-CDS" id="AAL52005"/>
    </conflict>
</comment>
<keyword id="KW-0963">Cytoplasm</keyword>
<keyword id="KW-0251">Elongation factor</keyword>
<keyword id="KW-0648">Protein biosynthesis</keyword>
<name>EFTS_BRUME</name>
<sequence length="305" mass="31491">MSISASLVKELRDLTGAGMMDCKAALAATEGKIEAAVDWLRAKGIAKADKKAGRTAAEGLVGVAASGNKAVVVEVNSETDFVARNDAFQELVRKIAQAALSTDGSSEAVANANVDGKTVTEAAKDAVATIGENISFRRSAALSVPQGVVATYIHNGVADGLGKLGVLVAIETAGDAEAAQAFGRQVAMHVAAVNPLALTSADVNPEAAEREKAIFIDQARQSGKPDNIIEKMVEGRMRKFYEEVVLLSQAFVINPDLTVEAALKDAEKAIGAPAKITGFARIALGEGIEKEESDFAAEVAAAAKG</sequence>
<evidence type="ECO:0000255" key="1">
    <source>
        <dbReference type="HAMAP-Rule" id="MF_00050"/>
    </source>
</evidence>
<evidence type="ECO:0000305" key="2"/>